<comment type="function">
    <text evidence="1 2 5">Accessory component of the DNA polymerase epsilon complex (By similarity). Participates in DNA repair and in chromosomal DNA replication (By similarity). Has a role in the entrance and progression through S phase (PubMed:24224125). Has a role in endoreplication (PubMed:24224125). Essential for viability and tissue development (PubMed:24224125).</text>
</comment>
<comment type="subunit">
    <text evidence="2">Component of the epsilon DNA polymerase complex consisting of four subunits: the catalytic subunit PolE1/DNApol-epsilon255 and the accessory subunits PolE2/DNApol-epsilon58, Chrac-14/DNApolE3 and PolE4.</text>
</comment>
<comment type="subcellular location">
    <subcellularLocation>
        <location evidence="3">Nucleus</location>
    </subcellularLocation>
</comment>
<comment type="developmental stage">
    <text evidence="4 5">Expressed in the embryo and larva (at protein level).</text>
</comment>
<comment type="disruption phenotype">
    <text evidence="5">Pupal lethal (PubMed:24224125). Results in smaller eye, leg and wing disk, brain lobe and salivary glands (PubMed:24224125). Results in defective entry and/or progression though S phase during the cell cycle in eye imaginal disk cells (PubMed:24224125). Results in defective endoreplication in salivary glands (PubMed:24224125).</text>
</comment>
<comment type="similarity">
    <text evidence="3">Belongs to the DNA polymerase epsilon subunit B family.</text>
</comment>
<comment type="sequence caution" evidence="7">
    <conflict type="erroneous initiation">
        <sequence resource="EMBL-CDS" id="AAL28879"/>
    </conflict>
    <text>Truncated N-terminus.</text>
</comment>
<comment type="sequence caution" evidence="7">
    <conflict type="erroneous initiation">
        <sequence resource="EMBL-CDS" id="ADA53568"/>
    </conflict>
    <text>Extended N-terminus.</text>
</comment>
<comment type="sequence caution" evidence="7">
    <conflict type="erroneous initiation">
        <sequence resource="EMBL-CDS" id="BAD10843"/>
    </conflict>
    <text>Truncated N-terminus.</text>
</comment>
<keyword id="KW-0235">DNA replication</keyword>
<keyword id="KW-0238">DNA-binding</keyword>
<keyword id="KW-0539">Nucleus</keyword>
<keyword id="KW-1185">Reference proteome</keyword>
<feature type="chain" id="PRO_0000448259" description="DNA polymerase epsilon subunit 2">
    <location>
        <begin position="1"/>
        <end position="525"/>
    </location>
</feature>
<feature type="sequence conflict" description="In Ref. 3; ABY20543." evidence="7" ref="3">
    <original>E</original>
    <variation>D</variation>
    <location>
        <position position="301"/>
    </location>
</feature>
<sequence length="525" mass="58759">MDVDLLPLRKRITNTFKLCGFLIRSENSSYLAEQLLPFDAAERDKWLTVITENLQSQKLLTPHVERAALEKAINELNRVGLDEGETVFALIDAFTVPRFRYNQRIKKFELDTQPRQLLTAPRMKSDYMQQRYAMLLQKTLRHDLFAPAVIQDGVGAEAQAKKFKLQFAENLLATSAMKEAVVLGLLTQLKEGKFYVEDPTGCVQLDLTGARFHAGFFCEGCFVLAEGNYNNGVLKVDGLGFPPAEPANSSRAFFGTANTWGGESAKLLKYSAGLQELERTNTETTIVFLSDVRLDLPVVMEKLRQLFVGYDSCPPQAIVLMGPFTASTRNHHELRHHLDALGGLAAGCEQLKKQTDLILVPSSEDPTAPNILPRAPIPECLAAGLLKAWPRTQLATNPCRLQYCTQQIVVCRLDLMAKFCRNTLHFPEDTSQIEQHFARTIVCQGHLVPIHPIAMPVHWDYDPALWLYPLPDLIVMGDSCQSFSSSQHGCTVLNTGSFVKSKFAFKVYIPATRTIEDSEIPDELE</sequence>
<accession>Q9VRQ7</accession>
<accession>A9UND8</accession>
<accession>D3DMG0</accession>
<accession>Q95RJ7</accession>
<organism evidence="13">
    <name type="scientific">Drosophila melanogaster</name>
    <name type="common">Fruit fly</name>
    <dbReference type="NCBI Taxonomy" id="7227"/>
    <lineage>
        <taxon>Eukaryota</taxon>
        <taxon>Metazoa</taxon>
        <taxon>Ecdysozoa</taxon>
        <taxon>Arthropoda</taxon>
        <taxon>Hexapoda</taxon>
        <taxon>Insecta</taxon>
        <taxon>Pterygota</taxon>
        <taxon>Neoptera</taxon>
        <taxon>Endopterygota</taxon>
        <taxon>Diptera</taxon>
        <taxon>Brachycera</taxon>
        <taxon>Muscomorpha</taxon>
        <taxon>Ephydroidea</taxon>
        <taxon>Drosophilidae</taxon>
        <taxon>Drosophila</taxon>
        <taxon>Sophophora</taxon>
    </lineage>
</organism>
<gene>
    <name evidence="12" type="primary">PolE2</name>
    <name evidence="6" type="synonym">DNApol-epsilon58</name>
    <name evidence="7" type="synonym">DNApolE2</name>
    <name evidence="12" type="ORF">CG10489</name>
</gene>
<proteinExistence type="evidence at protein level"/>
<evidence type="ECO:0000250" key="1">
    <source>
        <dbReference type="UniProtKB" id="P24482"/>
    </source>
</evidence>
<evidence type="ECO:0000250" key="2">
    <source>
        <dbReference type="UniProtKB" id="P56282"/>
    </source>
</evidence>
<evidence type="ECO:0000255" key="3">
    <source>
        <dbReference type="PIRNR" id="PIRNR000799"/>
    </source>
</evidence>
<evidence type="ECO:0000269" key="4">
    <source>
    </source>
</evidence>
<evidence type="ECO:0000269" key="5">
    <source>
    </source>
</evidence>
<evidence type="ECO:0000303" key="6">
    <source>
    </source>
</evidence>
<evidence type="ECO:0000305" key="7"/>
<evidence type="ECO:0000312" key="8">
    <source>
        <dbReference type="EMBL" id="AAL28879.1"/>
    </source>
</evidence>
<evidence type="ECO:0000312" key="9">
    <source>
        <dbReference type="EMBL" id="ABY20543.1"/>
    </source>
</evidence>
<evidence type="ECO:0000312" key="10">
    <source>
        <dbReference type="EMBL" id="ADA53568.1"/>
    </source>
</evidence>
<evidence type="ECO:0000312" key="11">
    <source>
        <dbReference type="EMBL" id="BAD10843.1"/>
    </source>
</evidence>
<evidence type="ECO:0000312" key="12">
    <source>
        <dbReference type="FlyBase" id="FBgn0035644"/>
    </source>
</evidence>
<evidence type="ECO:0000312" key="13">
    <source>
        <dbReference type="Proteomes" id="UP000000803"/>
    </source>
</evidence>
<reference evidence="13" key="1">
    <citation type="journal article" date="2000" name="Science">
        <title>The genome sequence of Drosophila melanogaster.</title>
        <authorList>
            <person name="Adams M.D."/>
            <person name="Celniker S.E."/>
            <person name="Holt R.A."/>
            <person name="Evans C.A."/>
            <person name="Gocayne J.D."/>
            <person name="Amanatides P.G."/>
            <person name="Scherer S.E."/>
            <person name="Li P.W."/>
            <person name="Hoskins R.A."/>
            <person name="Galle R.F."/>
            <person name="George R.A."/>
            <person name="Lewis S.E."/>
            <person name="Richards S."/>
            <person name="Ashburner M."/>
            <person name="Henderson S.N."/>
            <person name="Sutton G.G."/>
            <person name="Wortman J.R."/>
            <person name="Yandell M.D."/>
            <person name="Zhang Q."/>
            <person name="Chen L.X."/>
            <person name="Brandon R.C."/>
            <person name="Rogers Y.-H.C."/>
            <person name="Blazej R.G."/>
            <person name="Champe M."/>
            <person name="Pfeiffer B.D."/>
            <person name="Wan K.H."/>
            <person name="Doyle C."/>
            <person name="Baxter E.G."/>
            <person name="Helt G."/>
            <person name="Nelson C.R."/>
            <person name="Miklos G.L.G."/>
            <person name="Abril J.F."/>
            <person name="Agbayani A."/>
            <person name="An H.-J."/>
            <person name="Andrews-Pfannkoch C."/>
            <person name="Baldwin D."/>
            <person name="Ballew R.M."/>
            <person name="Basu A."/>
            <person name="Baxendale J."/>
            <person name="Bayraktaroglu L."/>
            <person name="Beasley E.M."/>
            <person name="Beeson K.Y."/>
            <person name="Benos P.V."/>
            <person name="Berman B.P."/>
            <person name="Bhandari D."/>
            <person name="Bolshakov S."/>
            <person name="Borkova D."/>
            <person name="Botchan M.R."/>
            <person name="Bouck J."/>
            <person name="Brokstein P."/>
            <person name="Brottier P."/>
            <person name="Burtis K.C."/>
            <person name="Busam D.A."/>
            <person name="Butler H."/>
            <person name="Cadieu E."/>
            <person name="Center A."/>
            <person name="Chandra I."/>
            <person name="Cherry J.M."/>
            <person name="Cawley S."/>
            <person name="Dahlke C."/>
            <person name="Davenport L.B."/>
            <person name="Davies P."/>
            <person name="de Pablos B."/>
            <person name="Delcher A."/>
            <person name="Deng Z."/>
            <person name="Mays A.D."/>
            <person name="Dew I."/>
            <person name="Dietz S.M."/>
            <person name="Dodson K."/>
            <person name="Doup L.E."/>
            <person name="Downes M."/>
            <person name="Dugan-Rocha S."/>
            <person name="Dunkov B.C."/>
            <person name="Dunn P."/>
            <person name="Durbin K.J."/>
            <person name="Evangelista C.C."/>
            <person name="Ferraz C."/>
            <person name="Ferriera S."/>
            <person name="Fleischmann W."/>
            <person name="Fosler C."/>
            <person name="Gabrielian A.E."/>
            <person name="Garg N.S."/>
            <person name="Gelbart W.M."/>
            <person name="Glasser K."/>
            <person name="Glodek A."/>
            <person name="Gong F."/>
            <person name="Gorrell J.H."/>
            <person name="Gu Z."/>
            <person name="Guan P."/>
            <person name="Harris M."/>
            <person name="Harris N.L."/>
            <person name="Harvey D.A."/>
            <person name="Heiman T.J."/>
            <person name="Hernandez J.R."/>
            <person name="Houck J."/>
            <person name="Hostin D."/>
            <person name="Houston K.A."/>
            <person name="Howland T.J."/>
            <person name="Wei M.-H."/>
            <person name="Ibegwam C."/>
            <person name="Jalali M."/>
            <person name="Kalush F."/>
            <person name="Karpen G.H."/>
            <person name="Ke Z."/>
            <person name="Kennison J.A."/>
            <person name="Ketchum K.A."/>
            <person name="Kimmel B.E."/>
            <person name="Kodira C.D."/>
            <person name="Kraft C.L."/>
            <person name="Kravitz S."/>
            <person name="Kulp D."/>
            <person name="Lai Z."/>
            <person name="Lasko P."/>
            <person name="Lei Y."/>
            <person name="Levitsky A.A."/>
            <person name="Li J.H."/>
            <person name="Li Z."/>
            <person name="Liang Y."/>
            <person name="Lin X."/>
            <person name="Liu X."/>
            <person name="Mattei B."/>
            <person name="McIntosh T.C."/>
            <person name="McLeod M.P."/>
            <person name="McPherson D."/>
            <person name="Merkulov G."/>
            <person name="Milshina N.V."/>
            <person name="Mobarry C."/>
            <person name="Morris J."/>
            <person name="Moshrefi A."/>
            <person name="Mount S.M."/>
            <person name="Moy M."/>
            <person name="Murphy B."/>
            <person name="Murphy L."/>
            <person name="Muzny D.M."/>
            <person name="Nelson D.L."/>
            <person name="Nelson D.R."/>
            <person name="Nelson K.A."/>
            <person name="Nixon K."/>
            <person name="Nusskern D.R."/>
            <person name="Pacleb J.M."/>
            <person name="Palazzolo M."/>
            <person name="Pittman G.S."/>
            <person name="Pan S."/>
            <person name="Pollard J."/>
            <person name="Puri V."/>
            <person name="Reese M.G."/>
            <person name="Reinert K."/>
            <person name="Remington K."/>
            <person name="Saunders R.D.C."/>
            <person name="Scheeler F."/>
            <person name="Shen H."/>
            <person name="Shue B.C."/>
            <person name="Siden-Kiamos I."/>
            <person name="Simpson M."/>
            <person name="Skupski M.P."/>
            <person name="Smith T.J."/>
            <person name="Spier E."/>
            <person name="Spradling A.C."/>
            <person name="Stapleton M."/>
            <person name="Strong R."/>
            <person name="Sun E."/>
            <person name="Svirskas R."/>
            <person name="Tector C."/>
            <person name="Turner R."/>
            <person name="Venter E."/>
            <person name="Wang A.H."/>
            <person name="Wang X."/>
            <person name="Wang Z.-Y."/>
            <person name="Wassarman D.A."/>
            <person name="Weinstock G.M."/>
            <person name="Weissenbach J."/>
            <person name="Williams S.M."/>
            <person name="Woodage T."/>
            <person name="Worley K.C."/>
            <person name="Wu D."/>
            <person name="Yang S."/>
            <person name="Yao Q.A."/>
            <person name="Ye J."/>
            <person name="Yeh R.-F."/>
            <person name="Zaveri J.S."/>
            <person name="Zhan M."/>
            <person name="Zhang G."/>
            <person name="Zhao Q."/>
            <person name="Zheng L."/>
            <person name="Zheng X.H."/>
            <person name="Zhong F.N."/>
            <person name="Zhong W."/>
            <person name="Zhou X."/>
            <person name="Zhu S.C."/>
            <person name="Zhu X."/>
            <person name="Smith H.O."/>
            <person name="Gibbs R.A."/>
            <person name="Myers E.W."/>
            <person name="Rubin G.M."/>
            <person name="Venter J.C."/>
        </authorList>
    </citation>
    <scope>NUCLEOTIDE SEQUENCE [LARGE SCALE GENOMIC DNA]</scope>
    <source>
        <strain evidence="13">Berkeley</strain>
    </source>
</reference>
<reference evidence="13" key="2">
    <citation type="journal article" date="2002" name="Genome Biol.">
        <title>Annotation of the Drosophila melanogaster euchromatic genome: a systematic review.</title>
        <authorList>
            <person name="Misra S."/>
            <person name="Crosby M.A."/>
            <person name="Mungall C.J."/>
            <person name="Matthews B.B."/>
            <person name="Campbell K.S."/>
            <person name="Hradecky P."/>
            <person name="Huang Y."/>
            <person name="Kaminker J.S."/>
            <person name="Millburn G.H."/>
            <person name="Prochnik S.E."/>
            <person name="Smith C.D."/>
            <person name="Tupy J.L."/>
            <person name="Whitfield E.J."/>
            <person name="Bayraktaroglu L."/>
            <person name="Berman B.P."/>
            <person name="Bettencourt B.R."/>
            <person name="Celniker S.E."/>
            <person name="de Grey A.D.N.J."/>
            <person name="Drysdale R.A."/>
            <person name="Harris N.L."/>
            <person name="Richter J."/>
            <person name="Russo S."/>
            <person name="Schroeder A.J."/>
            <person name="Shu S.Q."/>
            <person name="Stapleton M."/>
            <person name="Yamada C."/>
            <person name="Ashburner M."/>
            <person name="Gelbart W.M."/>
            <person name="Rubin G.M."/>
            <person name="Lewis S.E."/>
        </authorList>
    </citation>
    <scope>GENOME REANNOTATION</scope>
    <source>
        <strain evidence="13">Berkeley</strain>
    </source>
</reference>
<reference evidence="9 10" key="3">
    <citation type="submission" date="2009-12" db="EMBL/GenBank/DDBJ databases">
        <authorList>
            <person name="Booth B."/>
            <person name="Carlson J."/>
            <person name="Celniker S."/>
            <person name="Frise E."/>
            <person name="Kapadia B."/>
            <person name="Park S."/>
            <person name="Wan K."/>
            <person name="Yu C."/>
            <person name="Stapleton M."/>
        </authorList>
    </citation>
    <scope>NUCLEOTIDE SEQUENCE [LARGE SCALE MRNA]</scope>
</reference>
<reference evidence="8" key="4">
    <citation type="journal article" date="2002" name="Genome Biol.">
        <title>A Drosophila full-length cDNA resource.</title>
        <authorList>
            <person name="Stapleton M."/>
            <person name="Carlson J.W."/>
            <person name="Brokstein P."/>
            <person name="Yu C."/>
            <person name="Champe M."/>
            <person name="George R.A."/>
            <person name="Guarin H."/>
            <person name="Kronmiller B."/>
            <person name="Pacleb J.M."/>
            <person name="Park S."/>
            <person name="Wan K.H."/>
            <person name="Rubin G.M."/>
            <person name="Celniker S.E."/>
        </authorList>
    </citation>
    <scope>NUCLEOTIDE SEQUENCE [LARGE SCALE MRNA] OF 5-525</scope>
    <source>
        <strain evidence="8">Berkeley</strain>
        <tissue evidence="8">Embryo</tissue>
    </source>
</reference>
<reference evidence="11" key="5">
    <citation type="journal article" date="2004" name="Protein Expr. Purif.">
        <title>Subunit protein-affinity isolation of Drosophila DNA polymerase catalytic subunit.</title>
        <authorList>
            <person name="Oshige M."/>
            <person name="Takeuchi R."/>
            <person name="Ruike T."/>
            <person name="Ruike R."/>
            <person name="Kuroda K."/>
            <person name="Sakaguchi K."/>
        </authorList>
    </citation>
    <scope>NUCLEOTIDE SEQUENCE [MRNA] OF 5-525</scope>
    <scope>DEVELOPMENTAL STAGE</scope>
    <source>
        <strain evidence="11">Oregon-R</strain>
    </source>
</reference>
<reference evidence="7" key="6">
    <citation type="journal article" date="2013" name="Am. J. Cancer Res.">
        <title>Functional analysis of Drosophila DNA polymerase epsilon p58 subunit.</title>
        <authorList>
            <person name="Sahashi R."/>
            <person name="Matsuda R."/>
            <person name="Suyari O."/>
            <person name="Kawai M."/>
            <person name="Yoshida H."/>
            <person name="Cotterill S."/>
            <person name="Yamaguchi M."/>
        </authorList>
    </citation>
    <scope>FUNCTION</scope>
    <scope>DEVELOPMENTAL STAGE</scope>
    <scope>DISRUPTION PHENOTYPE</scope>
</reference>
<name>DPOE2_DROME</name>
<protein>
    <recommendedName>
        <fullName evidence="12">DNA polymerase epsilon subunit 2</fullName>
    </recommendedName>
    <alternativeName>
        <fullName evidence="3">DNA polymerase II subunit 2</fullName>
    </alternativeName>
    <alternativeName>
        <fullName evidence="6">DNA polymerase epsilon 58kD subunit</fullName>
    </alternativeName>
    <alternativeName>
        <fullName evidence="3">DNA polymerase epsilon subunit</fullName>
    </alternativeName>
</protein>
<dbReference type="EMBL" id="AB102715">
    <property type="protein sequence ID" value="BAD10843.1"/>
    <property type="status" value="ALT_INIT"/>
    <property type="molecule type" value="mRNA"/>
</dbReference>
<dbReference type="EMBL" id="AE014296">
    <property type="protein sequence ID" value="AAF50735.1"/>
    <property type="molecule type" value="Genomic_DNA"/>
</dbReference>
<dbReference type="EMBL" id="BT031302">
    <property type="protein sequence ID" value="ABY20543.1"/>
    <property type="molecule type" value="mRNA"/>
</dbReference>
<dbReference type="EMBL" id="BT120029">
    <property type="protein sequence ID" value="ADA53568.1"/>
    <property type="status" value="ALT_INIT"/>
    <property type="molecule type" value="mRNA"/>
</dbReference>
<dbReference type="EMBL" id="AY061331">
    <property type="protein sequence ID" value="AAL28879.1"/>
    <property type="status" value="ALT_INIT"/>
    <property type="molecule type" value="mRNA"/>
</dbReference>
<dbReference type="RefSeq" id="NP_647995.1">
    <property type="nucleotide sequence ID" value="NM_139738.2"/>
</dbReference>
<dbReference type="SMR" id="Q9VRQ7"/>
<dbReference type="ComplexPortal" id="CPX-2422">
    <property type="entry name" value="DNA polymerase epsilon complex"/>
</dbReference>
<dbReference type="FunCoup" id="Q9VRQ7">
    <property type="interactions" value="858"/>
</dbReference>
<dbReference type="IntAct" id="Q9VRQ7">
    <property type="interactions" value="6"/>
</dbReference>
<dbReference type="MINT" id="Q9VRQ7"/>
<dbReference type="STRING" id="7227.FBpp0076789"/>
<dbReference type="GlyGen" id="Q9VRQ7">
    <property type="glycosylation" value="1 site"/>
</dbReference>
<dbReference type="PaxDb" id="7227-FBpp0076789"/>
<dbReference type="EnsemblMetazoa" id="FBtr0077081">
    <property type="protein sequence ID" value="FBpp0076789"/>
    <property type="gene ID" value="FBgn0035644"/>
</dbReference>
<dbReference type="GeneID" id="38661"/>
<dbReference type="KEGG" id="dme:Dmel_CG10489"/>
<dbReference type="UCSC" id="CG10489-RA">
    <property type="organism name" value="d. melanogaster"/>
</dbReference>
<dbReference type="AGR" id="FB:FBgn0035644"/>
<dbReference type="CTD" id="5427"/>
<dbReference type="FlyBase" id="FBgn0035644">
    <property type="gene designation" value="PolE2"/>
</dbReference>
<dbReference type="VEuPathDB" id="VectorBase:FBgn0035644"/>
<dbReference type="eggNOG" id="KOG3818">
    <property type="taxonomic scope" value="Eukaryota"/>
</dbReference>
<dbReference type="GeneTree" id="ENSGT00390000012435"/>
<dbReference type="HOGENOM" id="CLU_010628_2_0_1"/>
<dbReference type="InParanoid" id="Q9VRQ7"/>
<dbReference type="OMA" id="FFCEGCF"/>
<dbReference type="OrthoDB" id="10254730at2759"/>
<dbReference type="PhylomeDB" id="Q9VRQ7"/>
<dbReference type="Reactome" id="R-DME-110314">
    <property type="pathway name" value="Recognition of DNA damage by PCNA-containing replication complex"/>
</dbReference>
<dbReference type="Reactome" id="R-DME-5651801">
    <property type="pathway name" value="PCNA-Dependent Long Patch Base Excision Repair"/>
</dbReference>
<dbReference type="Reactome" id="R-DME-5656169">
    <property type="pathway name" value="Termination of translesion DNA synthesis"/>
</dbReference>
<dbReference type="Reactome" id="R-DME-5696400">
    <property type="pathway name" value="Dual Incision in GG-NER"/>
</dbReference>
<dbReference type="Reactome" id="R-DME-6782135">
    <property type="pathway name" value="Dual incision in TC-NER"/>
</dbReference>
<dbReference type="Reactome" id="R-DME-68952">
    <property type="pathway name" value="DNA replication initiation"/>
</dbReference>
<dbReference type="Reactome" id="R-DME-68962">
    <property type="pathway name" value="Activation of the pre-replicative complex"/>
</dbReference>
<dbReference type="SignaLink" id="Q9VRQ7"/>
<dbReference type="BioGRID-ORCS" id="38661">
    <property type="hits" value="0 hits in 3 CRISPR screens"/>
</dbReference>
<dbReference type="GenomeRNAi" id="38661"/>
<dbReference type="PRO" id="PR:Q9VRQ7"/>
<dbReference type="Proteomes" id="UP000000803">
    <property type="component" value="Chromosome 3L"/>
</dbReference>
<dbReference type="Bgee" id="FBgn0035644">
    <property type="expression patterns" value="Expressed in secondary oocyte and 15 other cell types or tissues"/>
</dbReference>
<dbReference type="GO" id="GO:0008622">
    <property type="term" value="C:epsilon DNA polymerase complex"/>
    <property type="evidence" value="ECO:0000353"/>
    <property type="project" value="FlyBase"/>
</dbReference>
<dbReference type="GO" id="GO:0003677">
    <property type="term" value="F:DNA binding"/>
    <property type="evidence" value="ECO:0007669"/>
    <property type="project" value="UniProtKB-KW"/>
</dbReference>
<dbReference type="GO" id="GO:0042023">
    <property type="term" value="P:DNA endoreduplication"/>
    <property type="evidence" value="ECO:0000315"/>
    <property type="project" value="FlyBase"/>
</dbReference>
<dbReference type="GO" id="GO:0045004">
    <property type="term" value="P:DNA replication proofreading"/>
    <property type="evidence" value="ECO:0000314"/>
    <property type="project" value="FlyBase"/>
</dbReference>
<dbReference type="GO" id="GO:0006261">
    <property type="term" value="P:DNA-templated DNA replication"/>
    <property type="evidence" value="ECO:0000318"/>
    <property type="project" value="GO_Central"/>
</dbReference>
<dbReference type="GO" id="GO:0042276">
    <property type="term" value="P:error-prone translesion synthesis"/>
    <property type="evidence" value="ECO:0000318"/>
    <property type="project" value="GO_Central"/>
</dbReference>
<dbReference type="GO" id="GO:1902969">
    <property type="term" value="P:mitotic DNA replication"/>
    <property type="evidence" value="ECO:0000315"/>
    <property type="project" value="FlyBase"/>
</dbReference>
<dbReference type="GO" id="GO:0090068">
    <property type="term" value="P:positive regulation of cell cycle process"/>
    <property type="evidence" value="ECO:0000315"/>
    <property type="project" value="FlyBase"/>
</dbReference>
<dbReference type="GO" id="GO:0032877">
    <property type="term" value="P:positive regulation of DNA endoreduplication"/>
    <property type="evidence" value="ECO:0000315"/>
    <property type="project" value="FlyBase"/>
</dbReference>
<dbReference type="FunFam" id="3.60.21.50:FF:000009">
    <property type="entry name" value="DNA polymerase epsilon subunit"/>
    <property type="match status" value="1"/>
</dbReference>
<dbReference type="Gene3D" id="1.10.8.60">
    <property type="match status" value="1"/>
</dbReference>
<dbReference type="Gene3D" id="3.60.21.50">
    <property type="match status" value="1"/>
</dbReference>
<dbReference type="InterPro" id="IPR007185">
    <property type="entry name" value="DNA_pol_a/d/e_bsu"/>
</dbReference>
<dbReference type="InterPro" id="IPR024639">
    <property type="entry name" value="DNA_pol_e_bsu_N"/>
</dbReference>
<dbReference type="InterPro" id="IPR016266">
    <property type="entry name" value="POLE2"/>
</dbReference>
<dbReference type="PANTHER" id="PTHR12708:SF0">
    <property type="entry name" value="DNA POLYMERASE EPSILON SUBUNIT 2"/>
    <property type="match status" value="1"/>
</dbReference>
<dbReference type="PANTHER" id="PTHR12708">
    <property type="entry name" value="DNA POLYMERASE EPSILON SUBUNIT B"/>
    <property type="match status" value="1"/>
</dbReference>
<dbReference type="Pfam" id="PF04042">
    <property type="entry name" value="DNA_pol_E_B"/>
    <property type="match status" value="1"/>
</dbReference>
<dbReference type="Pfam" id="PF12213">
    <property type="entry name" value="Dpoe2NT"/>
    <property type="match status" value="1"/>
</dbReference>
<dbReference type="PIRSF" id="PIRSF000799">
    <property type="entry name" value="DNA_pol_eps_2"/>
    <property type="match status" value="1"/>
</dbReference>